<reference key="1">
    <citation type="submission" date="2007-05" db="EMBL/GenBank/DDBJ databases">
        <title>Complete sequence of chromosome of Staphylococcus aureus subsp. aureus JH9.</title>
        <authorList>
            <consortium name="US DOE Joint Genome Institute"/>
            <person name="Copeland A."/>
            <person name="Lucas S."/>
            <person name="Lapidus A."/>
            <person name="Barry K."/>
            <person name="Detter J.C."/>
            <person name="Glavina del Rio T."/>
            <person name="Hammon N."/>
            <person name="Israni S."/>
            <person name="Pitluck S."/>
            <person name="Chain P."/>
            <person name="Malfatti S."/>
            <person name="Shin M."/>
            <person name="Vergez L."/>
            <person name="Schmutz J."/>
            <person name="Larimer F."/>
            <person name="Land M."/>
            <person name="Hauser L."/>
            <person name="Kyrpides N."/>
            <person name="Kim E."/>
            <person name="Tomasz A."/>
            <person name="Richardson P."/>
        </authorList>
    </citation>
    <scope>NUCLEOTIDE SEQUENCE [LARGE SCALE GENOMIC DNA]</scope>
    <source>
        <strain>JH9</strain>
    </source>
</reference>
<evidence type="ECO:0000255" key="1">
    <source>
        <dbReference type="HAMAP-Rule" id="MF_00270"/>
    </source>
</evidence>
<evidence type="ECO:0000305" key="2"/>
<gene>
    <name evidence="1" type="primary">rpsR</name>
    <name type="ordered locus">SaurJH9_0415</name>
</gene>
<protein>
    <recommendedName>
        <fullName evidence="1">Small ribosomal subunit protein bS18</fullName>
    </recommendedName>
    <alternativeName>
        <fullName evidence="2">30S ribosomal protein S18</fullName>
    </alternativeName>
</protein>
<accession>A5IPU8</accession>
<sequence>MAGGPRRGGRRRKKVCYFTANGITHIDYKDTELLKRFISERGKILPRRVTGTSAKYQRMLTTAIKRSRHMALLPYVKEEQ</sequence>
<organism>
    <name type="scientific">Staphylococcus aureus (strain JH9)</name>
    <dbReference type="NCBI Taxonomy" id="359786"/>
    <lineage>
        <taxon>Bacteria</taxon>
        <taxon>Bacillati</taxon>
        <taxon>Bacillota</taxon>
        <taxon>Bacilli</taxon>
        <taxon>Bacillales</taxon>
        <taxon>Staphylococcaceae</taxon>
        <taxon>Staphylococcus</taxon>
    </lineage>
</organism>
<feature type="chain" id="PRO_1000078717" description="Small ribosomal subunit protein bS18">
    <location>
        <begin position="1"/>
        <end position="80"/>
    </location>
</feature>
<keyword id="KW-0687">Ribonucleoprotein</keyword>
<keyword id="KW-0689">Ribosomal protein</keyword>
<keyword id="KW-0694">RNA-binding</keyword>
<keyword id="KW-0699">rRNA-binding</keyword>
<dbReference type="EMBL" id="CP000703">
    <property type="protein sequence ID" value="ABQ48221.1"/>
    <property type="molecule type" value="Genomic_DNA"/>
</dbReference>
<dbReference type="RefSeq" id="WP_000897044.1">
    <property type="nucleotide sequence ID" value="NC_009487.1"/>
</dbReference>
<dbReference type="SMR" id="A5IPU8"/>
<dbReference type="GeneID" id="98344693"/>
<dbReference type="KEGG" id="saj:SaurJH9_0415"/>
<dbReference type="HOGENOM" id="CLU_148710_2_2_9"/>
<dbReference type="GO" id="GO:0022627">
    <property type="term" value="C:cytosolic small ribosomal subunit"/>
    <property type="evidence" value="ECO:0007669"/>
    <property type="project" value="TreeGrafter"/>
</dbReference>
<dbReference type="GO" id="GO:0070181">
    <property type="term" value="F:small ribosomal subunit rRNA binding"/>
    <property type="evidence" value="ECO:0007669"/>
    <property type="project" value="TreeGrafter"/>
</dbReference>
<dbReference type="GO" id="GO:0003735">
    <property type="term" value="F:structural constituent of ribosome"/>
    <property type="evidence" value="ECO:0007669"/>
    <property type="project" value="InterPro"/>
</dbReference>
<dbReference type="GO" id="GO:0006412">
    <property type="term" value="P:translation"/>
    <property type="evidence" value="ECO:0007669"/>
    <property type="project" value="UniProtKB-UniRule"/>
</dbReference>
<dbReference type="FunFam" id="4.10.640.10:FF:000003">
    <property type="entry name" value="30S ribosomal protein S18"/>
    <property type="match status" value="1"/>
</dbReference>
<dbReference type="Gene3D" id="4.10.640.10">
    <property type="entry name" value="Ribosomal protein S18"/>
    <property type="match status" value="1"/>
</dbReference>
<dbReference type="HAMAP" id="MF_00270">
    <property type="entry name" value="Ribosomal_bS18"/>
    <property type="match status" value="1"/>
</dbReference>
<dbReference type="InterPro" id="IPR001648">
    <property type="entry name" value="Ribosomal_bS18"/>
</dbReference>
<dbReference type="InterPro" id="IPR018275">
    <property type="entry name" value="Ribosomal_bS18_CS"/>
</dbReference>
<dbReference type="InterPro" id="IPR036870">
    <property type="entry name" value="Ribosomal_bS18_sf"/>
</dbReference>
<dbReference type="NCBIfam" id="TIGR00165">
    <property type="entry name" value="S18"/>
    <property type="match status" value="1"/>
</dbReference>
<dbReference type="PANTHER" id="PTHR13479">
    <property type="entry name" value="30S RIBOSOMAL PROTEIN S18"/>
    <property type="match status" value="1"/>
</dbReference>
<dbReference type="PANTHER" id="PTHR13479:SF40">
    <property type="entry name" value="SMALL RIBOSOMAL SUBUNIT PROTEIN BS18M"/>
    <property type="match status" value="1"/>
</dbReference>
<dbReference type="Pfam" id="PF01084">
    <property type="entry name" value="Ribosomal_S18"/>
    <property type="match status" value="1"/>
</dbReference>
<dbReference type="PRINTS" id="PR00974">
    <property type="entry name" value="RIBOSOMALS18"/>
</dbReference>
<dbReference type="SUPFAM" id="SSF46911">
    <property type="entry name" value="Ribosomal protein S18"/>
    <property type="match status" value="1"/>
</dbReference>
<dbReference type="PROSITE" id="PS00057">
    <property type="entry name" value="RIBOSOMAL_S18"/>
    <property type="match status" value="1"/>
</dbReference>
<name>RS18_STAA9</name>
<proteinExistence type="inferred from homology"/>
<comment type="function">
    <text evidence="1">Binds as a heterodimer with protein bS6 to the central domain of the 16S rRNA, where it helps stabilize the platform of the 30S subunit.</text>
</comment>
<comment type="subunit">
    <text evidence="1">Part of the 30S ribosomal subunit. Forms a tight heterodimer with protein bS6.</text>
</comment>
<comment type="similarity">
    <text evidence="1">Belongs to the bacterial ribosomal protein bS18 family.</text>
</comment>